<evidence type="ECO:0000250" key="1"/>
<evidence type="ECO:0000255" key="2"/>
<evidence type="ECO:0000256" key="3">
    <source>
        <dbReference type="SAM" id="MobiDB-lite"/>
    </source>
</evidence>
<evidence type="ECO:0000305" key="4"/>
<proteinExistence type="inferred from homology"/>
<accession>Q54WN6</accession>
<sequence length="515" mass="59635">MSSIIFIPNDADNINSIMVTISSSLSLVGCLFILSIYIYYKELREFQLKLIFIMTINDFIISIIFLIATHIQTKYFDAITNVFPFFCNFPDSLLHYFFLSSFFWEVCIAHTLIQVIKYNNDKVEDNLKKYFIFSNGLSALIMVSLFFIRSYSKIDCHHDSIFPHLLFFIPLLLTWIYNIIVCALLTKTFKEQAMNFGYSLGINGGSGSYINFTNNNSIDNYSNIIIKNDLIINNNNNINVNNNNNNINILFHVNVNNNNNKIIIKRIRKTPNIIWTSIFFLFSFGFIWSWSILVIILKYLSLDVKYILMISYFFIPLHGCMNAVCFGVNDRLRMNLKKSCKNYYYKFLGLFSLDKRKSYGINGNNKNNKNNNGANCEERSLIDYSPDDDDDEDDDNNNNNYSDGNYYQIPSPFLIDSRNSSNLTDYSVILDNNNNNNNNGPYNPTRSNSITELLYNNINSLNAIRILSNNNNNNNNNNNNNNNNNNNNNNINNNDNNNNNNNNNSFCTIDEDETK</sequence>
<keyword id="KW-0297">G-protein coupled receptor</keyword>
<keyword id="KW-0472">Membrane</keyword>
<keyword id="KW-0675">Receptor</keyword>
<keyword id="KW-1185">Reference proteome</keyword>
<keyword id="KW-0807">Transducer</keyword>
<keyword id="KW-0812">Transmembrane</keyword>
<keyword id="KW-1133">Transmembrane helix</keyword>
<comment type="function">
    <text evidence="1">Receptor for cAMP.</text>
</comment>
<comment type="subcellular location">
    <subcellularLocation>
        <location evidence="4">Membrane</location>
        <topology evidence="4">Multi-pass membrane protein</topology>
    </subcellularLocation>
</comment>
<comment type="similarity">
    <text evidence="4">Belongs to the G-protein coupled receptor 5 family.</text>
</comment>
<reference key="1">
    <citation type="journal article" date="2005" name="Nature">
        <title>The genome of the social amoeba Dictyostelium discoideum.</title>
        <authorList>
            <person name="Eichinger L."/>
            <person name="Pachebat J.A."/>
            <person name="Gloeckner G."/>
            <person name="Rajandream M.A."/>
            <person name="Sucgang R."/>
            <person name="Berriman M."/>
            <person name="Song J."/>
            <person name="Olsen R."/>
            <person name="Szafranski K."/>
            <person name="Xu Q."/>
            <person name="Tunggal B."/>
            <person name="Kummerfeld S."/>
            <person name="Madera M."/>
            <person name="Konfortov B.A."/>
            <person name="Rivero F."/>
            <person name="Bankier A.T."/>
            <person name="Lehmann R."/>
            <person name="Hamlin N."/>
            <person name="Davies R."/>
            <person name="Gaudet P."/>
            <person name="Fey P."/>
            <person name="Pilcher K."/>
            <person name="Chen G."/>
            <person name="Saunders D."/>
            <person name="Sodergren E.J."/>
            <person name="Davis P."/>
            <person name="Kerhornou A."/>
            <person name="Nie X."/>
            <person name="Hall N."/>
            <person name="Anjard C."/>
            <person name="Hemphill L."/>
            <person name="Bason N."/>
            <person name="Farbrother P."/>
            <person name="Desany B."/>
            <person name="Just E."/>
            <person name="Morio T."/>
            <person name="Rost R."/>
            <person name="Churcher C.M."/>
            <person name="Cooper J."/>
            <person name="Haydock S."/>
            <person name="van Driessche N."/>
            <person name="Cronin A."/>
            <person name="Goodhead I."/>
            <person name="Muzny D.M."/>
            <person name="Mourier T."/>
            <person name="Pain A."/>
            <person name="Lu M."/>
            <person name="Harper D."/>
            <person name="Lindsay R."/>
            <person name="Hauser H."/>
            <person name="James K.D."/>
            <person name="Quiles M."/>
            <person name="Madan Babu M."/>
            <person name="Saito T."/>
            <person name="Buchrieser C."/>
            <person name="Wardroper A."/>
            <person name="Felder M."/>
            <person name="Thangavelu M."/>
            <person name="Johnson D."/>
            <person name="Knights A."/>
            <person name="Loulseged H."/>
            <person name="Mungall K.L."/>
            <person name="Oliver K."/>
            <person name="Price C."/>
            <person name="Quail M.A."/>
            <person name="Urushihara H."/>
            <person name="Hernandez J."/>
            <person name="Rabbinowitsch E."/>
            <person name="Steffen D."/>
            <person name="Sanders M."/>
            <person name="Ma J."/>
            <person name="Kohara Y."/>
            <person name="Sharp S."/>
            <person name="Simmonds M.N."/>
            <person name="Spiegler S."/>
            <person name="Tivey A."/>
            <person name="Sugano S."/>
            <person name="White B."/>
            <person name="Walker D."/>
            <person name="Woodward J.R."/>
            <person name="Winckler T."/>
            <person name="Tanaka Y."/>
            <person name="Shaulsky G."/>
            <person name="Schleicher M."/>
            <person name="Weinstock G.M."/>
            <person name="Rosenthal A."/>
            <person name="Cox E.C."/>
            <person name="Chisholm R.L."/>
            <person name="Gibbs R.A."/>
            <person name="Loomis W.F."/>
            <person name="Platzer M."/>
            <person name="Kay R.R."/>
            <person name="Williams J.G."/>
            <person name="Dear P.H."/>
            <person name="Noegel A.A."/>
            <person name="Barrell B.G."/>
            <person name="Kuspa A."/>
        </authorList>
    </citation>
    <scope>NUCLEOTIDE SEQUENCE [LARGE SCALE GENOMIC DNA]</scope>
    <source>
        <strain>AX4</strain>
    </source>
</reference>
<reference key="2">
    <citation type="journal article" date="2006" name="Eur. J. Cell Biol.">
        <title>The Dictyostelium repertoire of seven transmembrane domain receptors.</title>
        <authorList>
            <person name="Prabhu Y."/>
            <person name="Eichinger L."/>
        </authorList>
    </citation>
    <scope>NOMENCLATURE</scope>
</reference>
<feature type="chain" id="PRO_0000371353" description="Cyclic AMP receptor-like protein G">
    <location>
        <begin position="1"/>
        <end position="515"/>
    </location>
</feature>
<feature type="topological domain" description="Extracellular" evidence="2">
    <location>
        <begin position="1"/>
        <end position="16"/>
    </location>
</feature>
<feature type="transmembrane region" description="Helical; Name=1" evidence="2">
    <location>
        <begin position="17"/>
        <end position="37"/>
    </location>
</feature>
<feature type="topological domain" description="Cytoplasmic" evidence="2">
    <location>
        <begin position="38"/>
        <end position="50"/>
    </location>
</feature>
<feature type="transmembrane region" description="Helical; Name=2" evidence="2">
    <location>
        <begin position="51"/>
        <end position="71"/>
    </location>
</feature>
<feature type="topological domain" description="Extracellular" evidence="2">
    <location>
        <begin position="72"/>
        <end position="92"/>
    </location>
</feature>
<feature type="transmembrane region" description="Helical; Name=3" evidence="2">
    <location>
        <begin position="93"/>
        <end position="113"/>
    </location>
</feature>
<feature type="topological domain" description="Cytoplasmic" evidence="2">
    <location>
        <begin position="114"/>
        <end position="129"/>
    </location>
</feature>
<feature type="transmembrane region" description="Helical; Name=4" evidence="2">
    <location>
        <begin position="130"/>
        <end position="150"/>
    </location>
</feature>
<feature type="topological domain" description="Extracellular" evidence="2">
    <location>
        <begin position="151"/>
        <end position="164"/>
    </location>
</feature>
<feature type="transmembrane region" description="Helical; Name=5" evidence="2">
    <location>
        <begin position="165"/>
        <end position="185"/>
    </location>
</feature>
<feature type="topological domain" description="Cytoplasmic" evidence="2">
    <location>
        <begin position="186"/>
        <end position="276"/>
    </location>
</feature>
<feature type="transmembrane region" description="Helical; Name=6" evidence="2">
    <location>
        <begin position="277"/>
        <end position="297"/>
    </location>
</feature>
<feature type="topological domain" description="Extracellular" evidence="2">
    <location>
        <begin position="298"/>
        <end position="306"/>
    </location>
</feature>
<feature type="transmembrane region" description="Helical; Name=7" evidence="2">
    <location>
        <begin position="307"/>
        <end position="327"/>
    </location>
</feature>
<feature type="topological domain" description="Cytoplasmic" evidence="2">
    <location>
        <begin position="328"/>
        <end position="515"/>
    </location>
</feature>
<feature type="region of interest" description="Disordered" evidence="3">
    <location>
        <begin position="362"/>
        <end position="409"/>
    </location>
</feature>
<feature type="region of interest" description="Disordered" evidence="3">
    <location>
        <begin position="469"/>
        <end position="515"/>
    </location>
</feature>
<feature type="compositionally biased region" description="Low complexity" evidence="3">
    <location>
        <begin position="362"/>
        <end position="375"/>
    </location>
</feature>
<feature type="compositionally biased region" description="Acidic residues" evidence="3">
    <location>
        <begin position="385"/>
        <end position="396"/>
    </location>
</feature>
<feature type="compositionally biased region" description="Low complexity" evidence="3">
    <location>
        <begin position="397"/>
        <end position="407"/>
    </location>
</feature>
<feature type="compositionally biased region" description="Low complexity" evidence="3">
    <location>
        <begin position="469"/>
        <end position="504"/>
    </location>
</feature>
<organism>
    <name type="scientific">Dictyostelium discoideum</name>
    <name type="common">Social amoeba</name>
    <dbReference type="NCBI Taxonomy" id="44689"/>
    <lineage>
        <taxon>Eukaryota</taxon>
        <taxon>Amoebozoa</taxon>
        <taxon>Evosea</taxon>
        <taxon>Eumycetozoa</taxon>
        <taxon>Dictyostelia</taxon>
        <taxon>Dictyosteliales</taxon>
        <taxon>Dictyosteliaceae</taxon>
        <taxon>Dictyostelium</taxon>
    </lineage>
</organism>
<gene>
    <name type="primary">crlG</name>
    <name type="ORF">DDB_G0279599</name>
</gene>
<name>CRLG_DICDI</name>
<dbReference type="EMBL" id="AAFI02000031">
    <property type="protein sequence ID" value="EAL67738.1"/>
    <property type="molecule type" value="Genomic_DNA"/>
</dbReference>
<dbReference type="RefSeq" id="XP_641681.1">
    <property type="nucleotide sequence ID" value="XM_636589.1"/>
</dbReference>
<dbReference type="FunCoup" id="Q54WN6">
    <property type="interactions" value="480"/>
</dbReference>
<dbReference type="PaxDb" id="44689-DDB0231310"/>
<dbReference type="EnsemblProtists" id="EAL67738">
    <property type="protein sequence ID" value="EAL67738"/>
    <property type="gene ID" value="DDB_G0279599"/>
</dbReference>
<dbReference type="GeneID" id="8622089"/>
<dbReference type="KEGG" id="ddi:DDB_G0279599"/>
<dbReference type="dictyBase" id="DDB_G0279599">
    <property type="gene designation" value="crlG"/>
</dbReference>
<dbReference type="VEuPathDB" id="AmoebaDB:DDB_G0279599"/>
<dbReference type="eggNOG" id="ENOG502RGV7">
    <property type="taxonomic scope" value="Eukaryota"/>
</dbReference>
<dbReference type="HOGENOM" id="CLU_529400_0_0_1"/>
<dbReference type="InParanoid" id="Q54WN6"/>
<dbReference type="OMA" id="KLIFIMT"/>
<dbReference type="PRO" id="PR:Q54WN6"/>
<dbReference type="Proteomes" id="UP000002195">
    <property type="component" value="Chromosome 3"/>
</dbReference>
<dbReference type="GO" id="GO:0005886">
    <property type="term" value="C:plasma membrane"/>
    <property type="evidence" value="ECO:0000318"/>
    <property type="project" value="GO_Central"/>
</dbReference>
<dbReference type="GO" id="GO:0004930">
    <property type="term" value="F:G protein-coupled receptor activity"/>
    <property type="evidence" value="ECO:0000318"/>
    <property type="project" value="GO_Central"/>
</dbReference>
<dbReference type="GO" id="GO:0007189">
    <property type="term" value="P:adenylate cyclase-activating G protein-coupled receptor signaling pathway"/>
    <property type="evidence" value="ECO:0000318"/>
    <property type="project" value="GO_Central"/>
</dbReference>
<dbReference type="GO" id="GO:0007166">
    <property type="term" value="P:cell surface receptor signaling pathway"/>
    <property type="evidence" value="ECO:0007669"/>
    <property type="project" value="InterPro"/>
</dbReference>
<dbReference type="Gene3D" id="1.20.1070.10">
    <property type="entry name" value="Rhodopsin 7-helix transmembrane proteins"/>
    <property type="match status" value="1"/>
</dbReference>
<dbReference type="InterPro" id="IPR022343">
    <property type="entry name" value="GCR1-cAMP_receptor"/>
</dbReference>
<dbReference type="InterPro" id="IPR017981">
    <property type="entry name" value="GPCR_2-like_7TM"/>
</dbReference>
<dbReference type="InterPro" id="IPR000832">
    <property type="entry name" value="GPCR_2_secretin-like"/>
</dbReference>
<dbReference type="InterPro" id="IPR022340">
    <property type="entry name" value="GPCR_GCR1_put"/>
</dbReference>
<dbReference type="PANTHER" id="PTHR23112:SF44">
    <property type="entry name" value="CYCLIC AMP RECEPTOR-LIKE PROTEIN G"/>
    <property type="match status" value="1"/>
</dbReference>
<dbReference type="PANTHER" id="PTHR23112">
    <property type="entry name" value="G PROTEIN-COUPLED RECEPTOR 157-RELATED"/>
    <property type="match status" value="1"/>
</dbReference>
<dbReference type="Pfam" id="PF00002">
    <property type="entry name" value="7tm_2"/>
    <property type="match status" value="1"/>
</dbReference>
<dbReference type="PRINTS" id="PR02001">
    <property type="entry name" value="GCR1CAMPR"/>
</dbReference>
<dbReference type="PRINTS" id="PR02000">
    <property type="entry name" value="GCR1PLANT"/>
</dbReference>
<dbReference type="SUPFAM" id="SSF81321">
    <property type="entry name" value="Family A G protein-coupled receptor-like"/>
    <property type="match status" value="1"/>
</dbReference>
<dbReference type="PROSITE" id="PS50261">
    <property type="entry name" value="G_PROTEIN_RECEP_F2_4"/>
    <property type="match status" value="1"/>
</dbReference>
<protein>
    <recommendedName>
        <fullName>Cyclic AMP receptor-like protein G</fullName>
    </recommendedName>
</protein>